<organism>
    <name type="scientific">Escherichia coli (strain K12 / MC4100 / BW2952)</name>
    <dbReference type="NCBI Taxonomy" id="595496"/>
    <lineage>
        <taxon>Bacteria</taxon>
        <taxon>Pseudomonadati</taxon>
        <taxon>Pseudomonadota</taxon>
        <taxon>Gammaproteobacteria</taxon>
        <taxon>Enterobacterales</taxon>
        <taxon>Enterobacteriaceae</taxon>
        <taxon>Escherichia</taxon>
    </lineage>
</organism>
<comment type="subcellular location">
    <subcellularLocation>
        <location evidence="1">Cell membrane</location>
        <topology evidence="1">Multi-pass membrane protein</topology>
    </subcellularLocation>
</comment>
<comment type="similarity">
    <text evidence="1">Belongs to the UPF0756 family.</text>
</comment>
<dbReference type="EMBL" id="CP001396">
    <property type="protein sequence ID" value="ACR62220.1"/>
    <property type="molecule type" value="Genomic_DNA"/>
</dbReference>
<dbReference type="RefSeq" id="WP_000460707.1">
    <property type="nucleotide sequence ID" value="NC_012759.1"/>
</dbReference>
<dbReference type="KEGG" id="ebw:BWG_1602"/>
<dbReference type="HOGENOM" id="CLU_125889_0_0_6"/>
<dbReference type="GO" id="GO:0005886">
    <property type="term" value="C:plasma membrane"/>
    <property type="evidence" value="ECO:0007669"/>
    <property type="project" value="UniProtKB-SubCell"/>
</dbReference>
<dbReference type="HAMAP" id="MF_01874">
    <property type="entry name" value="UPF0756"/>
    <property type="match status" value="1"/>
</dbReference>
<dbReference type="InterPro" id="IPR007382">
    <property type="entry name" value="UPF0756_TM"/>
</dbReference>
<dbReference type="PANTHER" id="PTHR38452">
    <property type="entry name" value="UPF0756 MEMBRANE PROTEIN YEAL"/>
    <property type="match status" value="1"/>
</dbReference>
<dbReference type="PANTHER" id="PTHR38452:SF1">
    <property type="entry name" value="UPF0756 MEMBRANE PROTEIN YEAL"/>
    <property type="match status" value="1"/>
</dbReference>
<dbReference type="Pfam" id="PF04284">
    <property type="entry name" value="DUF441"/>
    <property type="match status" value="1"/>
</dbReference>
<reference key="1">
    <citation type="journal article" date="2009" name="J. Bacteriol.">
        <title>Genomic sequencing reveals regulatory mutations and recombinational events in the widely used MC4100 lineage of Escherichia coli K-12.</title>
        <authorList>
            <person name="Ferenci T."/>
            <person name="Zhou Z."/>
            <person name="Betteridge T."/>
            <person name="Ren Y."/>
            <person name="Liu Y."/>
            <person name="Feng L."/>
            <person name="Reeves P.R."/>
            <person name="Wang L."/>
        </authorList>
    </citation>
    <scope>NUCLEOTIDE SEQUENCE [LARGE SCALE GENOMIC DNA]</scope>
    <source>
        <strain>K12 / MC4100 / BW2952</strain>
    </source>
</reference>
<gene>
    <name evidence="1" type="primary">yeaL</name>
    <name type="ordered locus">BWG_1602</name>
</gene>
<accession>C4ZZE5</accession>
<evidence type="ECO:0000255" key="1">
    <source>
        <dbReference type="HAMAP-Rule" id="MF_01874"/>
    </source>
</evidence>
<name>YEAL_ECOBW</name>
<protein>
    <recommendedName>
        <fullName evidence="1">UPF0756 membrane protein YeaL</fullName>
    </recommendedName>
</protein>
<keyword id="KW-1003">Cell membrane</keyword>
<keyword id="KW-0472">Membrane</keyword>
<keyword id="KW-0812">Transmembrane</keyword>
<keyword id="KW-1133">Transmembrane helix</keyword>
<sequence>MFDVTLLILLGLAALGFISHNTTVAVSILVLIIVRVTPLSTFFPWIEKQGLSIGIIILTIGVMAPIASGTLPPSTLIHSFLNWKSLVAIAVGVIVSWLGGRGVTLMGSQPQLVAGLLVGTVLGVALFRGVPVGPLIAAGLVSLIVGKQ</sequence>
<feature type="chain" id="PRO_0000388857" description="UPF0756 membrane protein YeaL">
    <location>
        <begin position="1"/>
        <end position="148"/>
    </location>
</feature>
<feature type="transmembrane region" description="Helical" evidence="1">
    <location>
        <begin position="14"/>
        <end position="34"/>
    </location>
</feature>
<feature type="transmembrane region" description="Helical" evidence="1">
    <location>
        <begin position="51"/>
        <end position="71"/>
    </location>
</feature>
<feature type="transmembrane region" description="Helical" evidence="1">
    <location>
        <begin position="86"/>
        <end position="106"/>
    </location>
</feature>
<feature type="transmembrane region" description="Helical" evidence="1">
    <location>
        <begin position="121"/>
        <end position="141"/>
    </location>
</feature>
<proteinExistence type="inferred from homology"/>